<protein>
    <recommendedName>
        <fullName>Peptide methionine sulfoxide reductase A5</fullName>
        <shortName>OsMSRA5</shortName>
        <ecNumber>1.8.4.11</ecNumber>
    </recommendedName>
    <alternativeName>
        <fullName>Peptide-methionine (S)-S-oxide reductase</fullName>
        <shortName>Peptide Met(O) reductase</shortName>
    </alternativeName>
    <alternativeName>
        <fullName>Protein-methionine-S-oxide reductase</fullName>
    </alternativeName>
</protein>
<reference key="1">
    <citation type="journal article" date="2005" name="Nature">
        <title>The map-based sequence of the rice genome.</title>
        <authorList>
            <consortium name="International rice genome sequencing project (IRGSP)"/>
        </authorList>
    </citation>
    <scope>NUCLEOTIDE SEQUENCE [LARGE SCALE GENOMIC DNA]</scope>
    <source>
        <strain>cv. Nipponbare</strain>
    </source>
</reference>
<reference key="2">
    <citation type="journal article" date="2008" name="Nucleic Acids Res.">
        <title>The rice annotation project database (RAP-DB): 2008 update.</title>
        <authorList>
            <consortium name="The rice annotation project (RAP)"/>
        </authorList>
    </citation>
    <scope>GENOME REANNOTATION</scope>
    <source>
        <strain>cv. Nipponbare</strain>
    </source>
</reference>
<reference key="3">
    <citation type="journal article" date="2013" name="Rice">
        <title>Improvement of the Oryza sativa Nipponbare reference genome using next generation sequence and optical map data.</title>
        <authorList>
            <person name="Kawahara Y."/>
            <person name="de la Bastide M."/>
            <person name="Hamilton J.P."/>
            <person name="Kanamori H."/>
            <person name="McCombie W.R."/>
            <person name="Ouyang S."/>
            <person name="Schwartz D.C."/>
            <person name="Tanaka T."/>
            <person name="Wu J."/>
            <person name="Zhou S."/>
            <person name="Childs K.L."/>
            <person name="Davidson R.M."/>
            <person name="Lin H."/>
            <person name="Quesada-Ocampo L."/>
            <person name="Vaillancourt B."/>
            <person name="Sakai H."/>
            <person name="Lee S.S."/>
            <person name="Kim J."/>
            <person name="Numa H."/>
            <person name="Itoh T."/>
            <person name="Buell C.R."/>
            <person name="Matsumoto T."/>
        </authorList>
    </citation>
    <scope>GENOME REANNOTATION</scope>
    <source>
        <strain>cv. Nipponbare</strain>
    </source>
</reference>
<reference key="4">
    <citation type="journal article" date="2003" name="Science">
        <title>Collection, mapping, and annotation of over 28,000 cDNA clones from japonica rice.</title>
        <authorList>
            <consortium name="The rice full-length cDNA consortium"/>
        </authorList>
    </citation>
    <scope>NUCLEOTIDE SEQUENCE [LARGE SCALE MRNA]</scope>
    <source>
        <strain>cv. Nipponbare</strain>
    </source>
</reference>
<reference key="5">
    <citation type="journal article" date="2006" name="Photosyn. Res.">
        <title>Plant methionine sulfoxide reductase A and B multigenic families.</title>
        <authorList>
            <person name="Rouhier N."/>
            <person name="Vieira Dos Santos C."/>
            <person name="Tarrago L."/>
            <person name="Rey P."/>
        </authorList>
    </citation>
    <scope>GENE FAMILY</scope>
    <scope>NOMENCLATURE</scope>
</reference>
<gene>
    <name type="primary">MSRA5</name>
    <name type="ordered locus">Os06g0138100</name>
    <name type="ordered locus">LOC_Os06g04650</name>
    <name type="ORF">OSJNBa0041F13.12</name>
</gene>
<name>MSRA5_ORYSJ</name>
<sequence length="254" mass="27417">MARGSAAAAIAGVVWVLLLLVGVASGARLPGGSGGNRGREPRGGAAAAAVATETAVFALGSFWRSEAAFGCLPGVIRTSVGYAGGSKARPEYRNLGDHAECVKVEYDPRLIQYKKLLEVFWASHDPREVFGQGPDVGNQYRSIIFTNGSVEARLAGLSKEKEQAKDRRSVITTQIQPIGAFYPAEPEHQKFELKRKPFLLQLIGNLPEEELLTSTLAAKLNAYAAELCSPNTQNRINSKIDEIAKKGWPILRDI</sequence>
<feature type="signal peptide" evidence="2">
    <location>
        <begin position="1"/>
        <end position="26"/>
    </location>
</feature>
<feature type="chain" id="PRO_0000395518" description="Peptide methionine sulfoxide reductase A5">
    <location>
        <begin position="27"/>
        <end position="254"/>
    </location>
</feature>
<evidence type="ECO:0000250" key="1"/>
<evidence type="ECO:0000255" key="2"/>
<evidence type="ECO:0000305" key="3"/>
<organism>
    <name type="scientific">Oryza sativa subsp. japonica</name>
    <name type="common">Rice</name>
    <dbReference type="NCBI Taxonomy" id="39947"/>
    <lineage>
        <taxon>Eukaryota</taxon>
        <taxon>Viridiplantae</taxon>
        <taxon>Streptophyta</taxon>
        <taxon>Embryophyta</taxon>
        <taxon>Tracheophyta</taxon>
        <taxon>Spermatophyta</taxon>
        <taxon>Magnoliopsida</taxon>
        <taxon>Liliopsida</taxon>
        <taxon>Poales</taxon>
        <taxon>Poaceae</taxon>
        <taxon>BOP clade</taxon>
        <taxon>Oryzoideae</taxon>
        <taxon>Oryzeae</taxon>
        <taxon>Oryzinae</taxon>
        <taxon>Oryza</taxon>
        <taxon>Oryza sativa</taxon>
    </lineage>
</organism>
<dbReference type="EC" id="1.8.4.11"/>
<dbReference type="EMBL" id="AP003708">
    <property type="protein sequence ID" value="BAD68657.1"/>
    <property type="molecule type" value="Genomic_DNA"/>
</dbReference>
<dbReference type="EMBL" id="AP008212">
    <property type="protein sequence ID" value="BAF18651.1"/>
    <property type="molecule type" value="Genomic_DNA"/>
</dbReference>
<dbReference type="EMBL" id="AP014962">
    <property type="protein sequence ID" value="BAS96054.1"/>
    <property type="molecule type" value="Genomic_DNA"/>
</dbReference>
<dbReference type="EMBL" id="AK069328">
    <property type="protein sequence ID" value="BAG91381.1"/>
    <property type="molecule type" value="mRNA"/>
</dbReference>
<dbReference type="RefSeq" id="XP_015642881.1">
    <property type="nucleotide sequence ID" value="XM_015787395.1"/>
</dbReference>
<dbReference type="SMR" id="Q5VPG8"/>
<dbReference type="FunCoup" id="Q5VPG8">
    <property type="interactions" value="601"/>
</dbReference>
<dbReference type="STRING" id="39947.Q5VPG8"/>
<dbReference type="PaxDb" id="39947-Q5VPG8"/>
<dbReference type="EnsemblPlants" id="Os06t0138100-01">
    <property type="protein sequence ID" value="Os06t0138100-01"/>
    <property type="gene ID" value="Os06g0138100"/>
</dbReference>
<dbReference type="Gramene" id="Os06t0138100-01">
    <property type="protein sequence ID" value="Os06t0138100-01"/>
    <property type="gene ID" value="Os06g0138100"/>
</dbReference>
<dbReference type="KEGG" id="dosa:Os06g0138100"/>
<dbReference type="eggNOG" id="KOG1635">
    <property type="taxonomic scope" value="Eukaryota"/>
</dbReference>
<dbReference type="HOGENOM" id="CLU_031040_6_0_1"/>
<dbReference type="InParanoid" id="Q5VPG8"/>
<dbReference type="OMA" id="QCFWGAE"/>
<dbReference type="OrthoDB" id="77405at2759"/>
<dbReference type="Proteomes" id="UP000000763">
    <property type="component" value="Chromosome 6"/>
</dbReference>
<dbReference type="Proteomes" id="UP000059680">
    <property type="component" value="Chromosome 6"/>
</dbReference>
<dbReference type="GO" id="GO:0005737">
    <property type="term" value="C:cytoplasm"/>
    <property type="evidence" value="ECO:0000318"/>
    <property type="project" value="GO_Central"/>
</dbReference>
<dbReference type="GO" id="GO:0036456">
    <property type="term" value="F:L-methionine-(S)-S-oxide reductase activity"/>
    <property type="evidence" value="ECO:0000318"/>
    <property type="project" value="GO_Central"/>
</dbReference>
<dbReference type="GO" id="GO:0008113">
    <property type="term" value="F:peptide-methionine (S)-S-oxide reductase activity"/>
    <property type="evidence" value="ECO:0000318"/>
    <property type="project" value="GO_Central"/>
</dbReference>
<dbReference type="GO" id="GO:0034599">
    <property type="term" value="P:cellular response to oxidative stress"/>
    <property type="evidence" value="ECO:0000318"/>
    <property type="project" value="GO_Central"/>
</dbReference>
<dbReference type="FunFam" id="3.30.1060.10:FF:000004">
    <property type="entry name" value="Peptide methionine sulfoxide reductase A5"/>
    <property type="match status" value="1"/>
</dbReference>
<dbReference type="Gene3D" id="3.30.1060.10">
    <property type="entry name" value="Peptide methionine sulphoxide reductase MsrA"/>
    <property type="match status" value="1"/>
</dbReference>
<dbReference type="HAMAP" id="MF_01401">
    <property type="entry name" value="MsrA"/>
    <property type="match status" value="1"/>
</dbReference>
<dbReference type="InterPro" id="IPR002569">
    <property type="entry name" value="Met_Sox_Rdtase_MsrA_dom"/>
</dbReference>
<dbReference type="InterPro" id="IPR036509">
    <property type="entry name" value="Met_Sox_Rdtase_MsrA_sf"/>
</dbReference>
<dbReference type="InterPro" id="IPR050162">
    <property type="entry name" value="MsrA_MetSO_reductase"/>
</dbReference>
<dbReference type="NCBIfam" id="TIGR00401">
    <property type="entry name" value="msrA"/>
    <property type="match status" value="1"/>
</dbReference>
<dbReference type="PANTHER" id="PTHR42799">
    <property type="entry name" value="MITOCHONDRIAL PEPTIDE METHIONINE SULFOXIDE REDUCTASE"/>
    <property type="match status" value="1"/>
</dbReference>
<dbReference type="PANTHER" id="PTHR42799:SF3">
    <property type="entry name" value="PEPTIDE METHIONINE SULFOXIDE REDUCTASE A5"/>
    <property type="match status" value="1"/>
</dbReference>
<dbReference type="Pfam" id="PF01625">
    <property type="entry name" value="PMSR"/>
    <property type="match status" value="1"/>
</dbReference>
<dbReference type="SUPFAM" id="SSF55068">
    <property type="entry name" value="Peptide methionine sulfoxide reductase"/>
    <property type="match status" value="1"/>
</dbReference>
<proteinExistence type="evidence at transcript level"/>
<keyword id="KW-0560">Oxidoreductase</keyword>
<keyword id="KW-1185">Reference proteome</keyword>
<keyword id="KW-0732">Signal</keyword>
<comment type="function">
    <text evidence="1">Catalyzes the reduction of methionine sulfoxide (MetSO) to methionine in proteins. Plays a protective role against oxidative stress by restoring activity to proteins that have been inactivated by methionine oxidation. MSRA family specifically reduces the MetSO S-enantiomer (By similarity).</text>
</comment>
<comment type="catalytic activity">
    <reaction>
        <text>L-methionyl-[protein] + [thioredoxin]-disulfide + H2O = L-methionyl-(S)-S-oxide-[protein] + [thioredoxin]-dithiol</text>
        <dbReference type="Rhea" id="RHEA:14217"/>
        <dbReference type="Rhea" id="RHEA-COMP:10698"/>
        <dbReference type="Rhea" id="RHEA-COMP:10700"/>
        <dbReference type="Rhea" id="RHEA-COMP:12313"/>
        <dbReference type="Rhea" id="RHEA-COMP:12315"/>
        <dbReference type="ChEBI" id="CHEBI:15377"/>
        <dbReference type="ChEBI" id="CHEBI:16044"/>
        <dbReference type="ChEBI" id="CHEBI:29950"/>
        <dbReference type="ChEBI" id="CHEBI:44120"/>
        <dbReference type="ChEBI" id="CHEBI:50058"/>
        <dbReference type="EC" id="1.8.4.11"/>
    </reaction>
</comment>
<comment type="catalytic activity">
    <reaction>
        <text>[thioredoxin]-disulfide + L-methionine + H2O = L-methionine (S)-S-oxide + [thioredoxin]-dithiol</text>
        <dbReference type="Rhea" id="RHEA:19993"/>
        <dbReference type="Rhea" id="RHEA-COMP:10698"/>
        <dbReference type="Rhea" id="RHEA-COMP:10700"/>
        <dbReference type="ChEBI" id="CHEBI:15377"/>
        <dbReference type="ChEBI" id="CHEBI:29950"/>
        <dbReference type="ChEBI" id="CHEBI:50058"/>
        <dbReference type="ChEBI" id="CHEBI:57844"/>
        <dbReference type="ChEBI" id="CHEBI:58772"/>
        <dbReference type="EC" id="1.8.4.11"/>
    </reaction>
</comment>
<comment type="similarity">
    <text evidence="3">Belongs to the MsrA Met sulfoxide reductase family.</text>
</comment>
<accession>Q5VPG8</accession>
<accession>A0A0P0WSU3</accession>